<sequence length="1006" mass="110945">MIAQLSTVAPSANYPEFLEALRNSGFRGQISADYATRTVLATDNSIYQRLPQAAVFPLDADDVARVATLMGEPRFQQVKLTPRGGGTGTNGQSLTDGIVVDLSRHMNNILEINVEERWVRVQAGTVKDQLNAALKPHGLFFAPELSTSNRATVGGMINTDASGQGSCTYGKTRDHVLELHSVLLGGERLHSLPIDDAALEQACAAPGRVGEVYRMAREIQETQAELIETTFPKLNRCLTGYDLAHLRDEQGRFNLNSVLCGAEGSLGYVVEAKLNVLPIPKYAVLVNVRYTSFMDALRDANALMAHKPLSIETVDSKVLMLAMKDIVWHSVAEYFPADPERPTLGINLVEFCGDEPAEVNAKVQAFIQHLQSDTSVERLGHTLAEGAEAVTRVYTMRKRSVGLLGNVEGEVRPQPFVEDTAVPPEQLADYIADFRALLDGYGLAYGMFGHVDAGVLHVRPALDMKDPVQAALVKPISDAVAALTKRYGGLLWGEHGKGLRSEYVPEYFGELYPALQRLKGAFDPHNQLNPGKICTPLGSAEGLTPVDGVTLRGDLDRTIDERVWQDFPSAVHCNGNGACYNYDPNDAMCPSWKATRERQHSPKGRASLMREWLRLQGEANIDVLAAARNKVSWLKGLPARLRNNRARNQGQEDFSHEVYDAMAGCLACKSCAGQCPIKVNVPDFRSRFLELYHGRYQRPLRDYLIGSLEFTIPYLAHAPGLYNAVMGSKWVSQLLADKVGMVDSPLISRFNFQATLTRCRVGMATVPALRELTPAQRERSIVLVQDAFTRYFETPLLSAFIDLAHRLGHRVFLAPYSANGKPLHVQGFLGAFAKAAIRNATQLKALADCGVPLVGLDPAMTLVYRQEYQKVPGLEGCPKVLLPQEWLMDVLPEQAPAAPGSFRLMAHCTEKTNVPASTRQWEQVFARLGLKLVTEATGCCGMSGTYGHEARNQETSRTIFEQSWATKLDKDGEPLATGYSCRSQVKRMTERKMRHPLEVVLQYAQR</sequence>
<proteinExistence type="evidence at transcript level"/>
<protein>
    <recommendedName>
        <fullName evidence="1">D-2-hydroxyglutarate dehydrogenase</fullName>
        <shortName evidence="1">D2HGDH</shortName>
        <ecNumber evidence="1">1.1.99.39</ecNumber>
    </recommendedName>
</protein>
<accession>Q88EH0</accession>
<accession>Q9EZK2</accession>
<evidence type="ECO:0000250" key="1">
    <source>
        <dbReference type="UniProtKB" id="P77748"/>
    </source>
</evidence>
<evidence type="ECO:0000250" key="2">
    <source>
        <dbReference type="UniProtKB" id="Q8N465"/>
    </source>
</evidence>
<evidence type="ECO:0000255" key="3">
    <source>
        <dbReference type="PROSITE-ProRule" id="PRU00711"/>
    </source>
</evidence>
<evidence type="ECO:0000255" key="4">
    <source>
        <dbReference type="PROSITE-ProRule" id="PRU00718"/>
    </source>
</evidence>
<evidence type="ECO:0000269" key="5">
    <source>
    </source>
</evidence>
<evidence type="ECO:0000303" key="6">
    <source>
    </source>
</evidence>
<evidence type="ECO:0000305" key="7"/>
<evidence type="ECO:0000305" key="8">
    <source>
    </source>
</evidence>
<evidence type="ECO:0000312" key="9">
    <source>
        <dbReference type="EMBL" id="AAN70068.1"/>
    </source>
</evidence>
<organism>
    <name type="scientific">Pseudomonas putida (strain ATCC 47054 / DSM 6125 / CFBP 8728 / NCIMB 11950 / KT2440)</name>
    <dbReference type="NCBI Taxonomy" id="160488"/>
    <lineage>
        <taxon>Bacteria</taxon>
        <taxon>Pseudomonadati</taxon>
        <taxon>Pseudomonadota</taxon>
        <taxon>Gammaproteobacteria</taxon>
        <taxon>Pseudomonadales</taxon>
        <taxon>Pseudomonadaceae</taxon>
        <taxon>Pseudomonas</taxon>
    </lineage>
</organism>
<reference key="1">
    <citation type="journal article" date="2002" name="Environ. Microbiol.">
        <title>Complete genome sequence and comparative analysis of the metabolically versatile Pseudomonas putida KT2440.</title>
        <authorList>
            <person name="Nelson K.E."/>
            <person name="Weinel C."/>
            <person name="Paulsen I.T."/>
            <person name="Dodson R.J."/>
            <person name="Hilbert H."/>
            <person name="Martins dos Santos V.A.P."/>
            <person name="Fouts D.E."/>
            <person name="Gill S.R."/>
            <person name="Pop M."/>
            <person name="Holmes M."/>
            <person name="Brinkac L.M."/>
            <person name="Beanan M.J."/>
            <person name="DeBoy R.T."/>
            <person name="Daugherty S.C."/>
            <person name="Kolonay J.F."/>
            <person name="Madupu R."/>
            <person name="Nelson W.C."/>
            <person name="White O."/>
            <person name="Peterson J.D."/>
            <person name="Khouri H.M."/>
            <person name="Hance I."/>
            <person name="Chris Lee P."/>
            <person name="Holtzapple E.K."/>
            <person name="Scanlan D."/>
            <person name="Tran K."/>
            <person name="Moazzez A."/>
            <person name="Utterback T.R."/>
            <person name="Rizzo M."/>
            <person name="Lee K."/>
            <person name="Kosack D."/>
            <person name="Moestl D."/>
            <person name="Wedler H."/>
            <person name="Lauber J."/>
            <person name="Stjepandic D."/>
            <person name="Hoheisel J."/>
            <person name="Straetz M."/>
            <person name="Heim S."/>
            <person name="Kiewitz C."/>
            <person name="Eisen J.A."/>
            <person name="Timmis K.N."/>
            <person name="Duesterhoeft A."/>
            <person name="Tuemmler B."/>
            <person name="Fraser C.M."/>
        </authorList>
    </citation>
    <scope>NUCLEOTIDE SEQUENCE [LARGE SCALE GENOMIC DNA]</scope>
    <source>
        <strain>ATCC 47054 / DSM 6125 / CFBP 8728 / NCIMB 11950 / KT2440</strain>
    </source>
</reference>
<reference key="2">
    <citation type="journal article" date="2019" name="MBio">
        <title>Massively parallel fitness profiling reveals multiple novel enzymes in Pseudomonas putida lysine metabolism.</title>
        <authorList>
            <person name="Thompson M.G."/>
            <person name="Blake-Hedges J.M."/>
            <person name="Cruz-Morales P."/>
            <person name="Barajas J.F."/>
            <person name="Curran S.C."/>
            <person name="Eiben C.B."/>
            <person name="Harris N.C."/>
            <person name="Benites V.T."/>
            <person name="Gin J.W."/>
            <person name="Sharpless W.A."/>
            <person name="Twigg F.F."/>
            <person name="Skyrud W."/>
            <person name="Krishna R.N."/>
            <person name="Pereira J.H."/>
            <person name="Baidoo E.E.K."/>
            <person name="Petzold C.J."/>
            <person name="Adams P.D."/>
            <person name="Arkin A.P."/>
            <person name="Deutschbauer A.M."/>
            <person name="Keasling J.D."/>
        </authorList>
    </citation>
    <scope>FUNCTION</scope>
    <scope>PATHWAY</scope>
    <scope>INDUCTION</scope>
    <scope>DISRUPTION PHENOTYPE</scope>
    <source>
        <strain>ATCC 47054 / DSM 6125 / CFBP 8728 / NCIMB 11950 / KT2440</strain>
    </source>
</reference>
<comment type="function">
    <text evidence="5 8">Catalyzes the oxidation of D-2-hydroxyglutarate (D-2-HGA) to 2-oxoglutarate (Probable). Is involved in a D-lysine catabolic pathway (PubMed:31064836).</text>
</comment>
<comment type="catalytic activity">
    <reaction evidence="1">
        <text>(R)-2-hydroxyglutarate + A = 2-oxoglutarate + AH2</text>
        <dbReference type="Rhea" id="RHEA:38295"/>
        <dbReference type="ChEBI" id="CHEBI:13193"/>
        <dbReference type="ChEBI" id="CHEBI:15801"/>
        <dbReference type="ChEBI" id="CHEBI:16810"/>
        <dbReference type="ChEBI" id="CHEBI:17499"/>
        <dbReference type="EC" id="1.1.99.39"/>
    </reaction>
    <physiologicalReaction direction="left-to-right" evidence="8">
        <dbReference type="Rhea" id="RHEA:38296"/>
    </physiologicalReaction>
</comment>
<comment type="cofactor">
    <cofactor evidence="3">
        <name>[4Fe-4S] cluster</name>
        <dbReference type="ChEBI" id="CHEBI:49883"/>
    </cofactor>
    <text evidence="3">Binds 1 [4Fe-4S] cluster.</text>
</comment>
<comment type="cofactor">
    <cofactor evidence="1">
        <name>FAD</name>
        <dbReference type="ChEBI" id="CHEBI:57692"/>
    </cofactor>
</comment>
<comment type="pathway">
    <text evidence="5">Amino-acid degradation.</text>
</comment>
<comment type="induction">
    <text evidence="5">Up-regulated when grown on L-lysine, D-lysine or 2-aminoadipate.</text>
</comment>
<comment type="disruption phenotype">
    <text evidence="5">Deletion mutant cannot grow on D-lysine as a sole carbon source and shows attenuated growth on L-lysine (PubMed:31064836). Mutant accumulates D-2-hydroxyglutarate (PubMed:31064836).</text>
</comment>
<comment type="similarity">
    <text evidence="7">In the N-terminal section; belongs to the FAD-binding oxidoreductase/transferase type 4 family.</text>
</comment>
<keyword id="KW-0004">4Fe-4S</keyword>
<keyword id="KW-0274">FAD</keyword>
<keyword id="KW-0285">Flavoprotein</keyword>
<keyword id="KW-0408">Iron</keyword>
<keyword id="KW-0411">Iron-sulfur</keyword>
<keyword id="KW-0479">Metal-binding</keyword>
<keyword id="KW-0560">Oxidoreductase</keyword>
<keyword id="KW-1185">Reference proteome</keyword>
<feature type="chain" id="PRO_0000457781" description="D-2-hydroxyglutarate dehydrogenase">
    <location>
        <begin position="1"/>
        <end position="1006"/>
    </location>
</feature>
<feature type="domain" description="FAD-binding PCMH-type" evidence="4">
    <location>
        <begin position="47"/>
        <end position="279"/>
    </location>
</feature>
<feature type="domain" description="4Fe-4S ferredoxin-type" evidence="3">
    <location>
        <begin position="655"/>
        <end position="687"/>
    </location>
</feature>
<feature type="binding site" evidence="2">
    <location>
        <position position="397"/>
    </location>
    <ligand>
        <name>(R)-2-hydroxyglutarate</name>
        <dbReference type="ChEBI" id="CHEBI:15801"/>
    </ligand>
</feature>
<feature type="binding site" evidence="2">
    <location>
        <position position="495"/>
    </location>
    <ligand>
        <name>(R)-2-hydroxyglutarate</name>
        <dbReference type="ChEBI" id="CHEBI:15801"/>
    </ligand>
</feature>
<feature type="binding site" evidence="3">
    <location>
        <position position="665"/>
    </location>
    <ligand>
        <name>[4Fe-4S] cluster</name>
        <dbReference type="ChEBI" id="CHEBI:49883"/>
    </ligand>
</feature>
<feature type="binding site" evidence="3">
    <location>
        <position position="668"/>
    </location>
    <ligand>
        <name>[4Fe-4S] cluster</name>
        <dbReference type="ChEBI" id="CHEBI:49883"/>
    </ligand>
</feature>
<feature type="binding site" evidence="3">
    <location>
        <position position="671"/>
    </location>
    <ligand>
        <name>[4Fe-4S] cluster</name>
        <dbReference type="ChEBI" id="CHEBI:49883"/>
    </ligand>
</feature>
<feature type="binding site" evidence="3">
    <location>
        <position position="675"/>
    </location>
    <ligand>
        <name>[4Fe-4S] cluster</name>
        <dbReference type="ChEBI" id="CHEBI:49883"/>
    </ligand>
</feature>
<gene>
    <name evidence="6" type="primary">ydiJ</name>
    <name evidence="9" type="ordered locus">PP_4493</name>
</gene>
<dbReference type="EC" id="1.1.99.39" evidence="1"/>
<dbReference type="EMBL" id="AE015451">
    <property type="protein sequence ID" value="AAN70068.1"/>
    <property type="molecule type" value="Genomic_DNA"/>
</dbReference>
<dbReference type="RefSeq" id="NP_746604.1">
    <property type="nucleotide sequence ID" value="NC_002947.4"/>
</dbReference>
<dbReference type="RefSeq" id="WP_010955182.1">
    <property type="nucleotide sequence ID" value="NZ_CP169744.1"/>
</dbReference>
<dbReference type="SMR" id="Q88EH0"/>
<dbReference type="STRING" id="160488.PP_4493"/>
<dbReference type="PaxDb" id="160488-PP_4493"/>
<dbReference type="KEGG" id="ppu:PP_4493"/>
<dbReference type="PATRIC" id="fig|160488.4.peg.4783"/>
<dbReference type="eggNOG" id="COG0247">
    <property type="taxonomic scope" value="Bacteria"/>
</dbReference>
<dbReference type="eggNOG" id="COG0277">
    <property type="taxonomic scope" value="Bacteria"/>
</dbReference>
<dbReference type="HOGENOM" id="CLU_010756_1_0_6"/>
<dbReference type="OrthoDB" id="9811557at2"/>
<dbReference type="PhylomeDB" id="Q88EH0"/>
<dbReference type="BioCyc" id="MetaCyc:G1G01-4796-MONOMER"/>
<dbReference type="BioCyc" id="PPUT160488:G1G01-4796-MONOMER"/>
<dbReference type="Proteomes" id="UP000000556">
    <property type="component" value="Chromosome"/>
</dbReference>
<dbReference type="GO" id="GO:0051539">
    <property type="term" value="F:4 iron, 4 sulfur cluster binding"/>
    <property type="evidence" value="ECO:0007669"/>
    <property type="project" value="UniProtKB-KW"/>
</dbReference>
<dbReference type="GO" id="GO:0004458">
    <property type="term" value="F:D-lactate dehydrogenase (cytochrome) activity"/>
    <property type="evidence" value="ECO:0007669"/>
    <property type="project" value="TreeGrafter"/>
</dbReference>
<dbReference type="GO" id="GO:0008720">
    <property type="term" value="F:D-lactate dehydrogenase activity"/>
    <property type="evidence" value="ECO:0007669"/>
    <property type="project" value="TreeGrafter"/>
</dbReference>
<dbReference type="GO" id="GO:0071949">
    <property type="term" value="F:FAD binding"/>
    <property type="evidence" value="ECO:0007669"/>
    <property type="project" value="InterPro"/>
</dbReference>
<dbReference type="GO" id="GO:0046872">
    <property type="term" value="F:metal ion binding"/>
    <property type="evidence" value="ECO:0007669"/>
    <property type="project" value="UniProtKB-KW"/>
</dbReference>
<dbReference type="GO" id="GO:1903457">
    <property type="term" value="P:lactate catabolic process"/>
    <property type="evidence" value="ECO:0007669"/>
    <property type="project" value="TreeGrafter"/>
</dbReference>
<dbReference type="FunFam" id="3.30.70.2740:FF:000003">
    <property type="entry name" value="Oxidoreductase, FAD-binding, putative"/>
    <property type="match status" value="1"/>
</dbReference>
<dbReference type="Gene3D" id="3.30.465.10">
    <property type="match status" value="1"/>
</dbReference>
<dbReference type="Gene3D" id="3.30.70.2740">
    <property type="match status" value="1"/>
</dbReference>
<dbReference type="InterPro" id="IPR017900">
    <property type="entry name" value="4Fe4S_Fe_S_CS"/>
</dbReference>
<dbReference type="InterPro" id="IPR004113">
    <property type="entry name" value="FAD-bd_oxidored_4_C"/>
</dbReference>
<dbReference type="InterPro" id="IPR016166">
    <property type="entry name" value="FAD-bd_PCMH"/>
</dbReference>
<dbReference type="InterPro" id="IPR036318">
    <property type="entry name" value="FAD-bd_PCMH-like_sf"/>
</dbReference>
<dbReference type="InterPro" id="IPR016169">
    <property type="entry name" value="FAD-bd_PCMH_sub2"/>
</dbReference>
<dbReference type="InterPro" id="IPR016164">
    <property type="entry name" value="FAD-linked_Oxase-like_C"/>
</dbReference>
<dbReference type="InterPro" id="IPR006094">
    <property type="entry name" value="Oxid_FAD_bind_N"/>
</dbReference>
<dbReference type="PANTHER" id="PTHR11748:SF119">
    <property type="entry name" value="D-2-HYDROXYGLUTARATE DEHYDROGENASE"/>
    <property type="match status" value="1"/>
</dbReference>
<dbReference type="PANTHER" id="PTHR11748">
    <property type="entry name" value="D-LACTATE DEHYDROGENASE"/>
    <property type="match status" value="1"/>
</dbReference>
<dbReference type="Pfam" id="PF02913">
    <property type="entry name" value="FAD-oxidase_C"/>
    <property type="match status" value="1"/>
</dbReference>
<dbReference type="Pfam" id="PF01565">
    <property type="entry name" value="FAD_binding_4"/>
    <property type="match status" value="1"/>
</dbReference>
<dbReference type="SUPFAM" id="SSF46548">
    <property type="entry name" value="alpha-helical ferredoxin"/>
    <property type="match status" value="1"/>
</dbReference>
<dbReference type="SUPFAM" id="SSF56176">
    <property type="entry name" value="FAD-binding/transporter-associated domain-like"/>
    <property type="match status" value="1"/>
</dbReference>
<dbReference type="SUPFAM" id="SSF55103">
    <property type="entry name" value="FAD-linked oxidases, C-terminal domain"/>
    <property type="match status" value="1"/>
</dbReference>
<dbReference type="PROSITE" id="PS00198">
    <property type="entry name" value="4FE4S_FER_1"/>
    <property type="match status" value="1"/>
</dbReference>
<dbReference type="PROSITE" id="PS51387">
    <property type="entry name" value="FAD_PCMH"/>
    <property type="match status" value="1"/>
</dbReference>
<name>D2HDH_PSEPK</name>